<proteinExistence type="inferred from homology"/>
<name>DEF_PASMU</name>
<sequence>MARLNVLVYPDERLKIIAKPVVEVNDEIREIVDNMFETMYLEEGIGLAATQVNIHQRIITIDVEGTKENQYVLINPEIIDSCGETGIEEGCLSLPGFRGFVPRKEKVTIKALDRHGEEYTLSAEGLLAICIQHEIDHLNGIVFADYLSPLKRQRMKEKLLKLQKQLARQK</sequence>
<reference key="1">
    <citation type="journal article" date="2001" name="Proc. Natl. Acad. Sci. U.S.A.">
        <title>Complete genomic sequence of Pasteurella multocida Pm70.</title>
        <authorList>
            <person name="May B.J."/>
            <person name="Zhang Q."/>
            <person name="Li L.L."/>
            <person name="Paustian M.L."/>
            <person name="Whittam T.S."/>
            <person name="Kapur V."/>
        </authorList>
    </citation>
    <scope>NUCLEOTIDE SEQUENCE [LARGE SCALE GENOMIC DNA]</scope>
    <source>
        <strain>Pm70</strain>
    </source>
</reference>
<comment type="function">
    <text evidence="1">Removes the formyl group from the N-terminal Met of newly synthesized proteins. Requires at least a dipeptide for an efficient rate of reaction. N-terminal L-methionine is a prerequisite for activity but the enzyme has broad specificity at other positions.</text>
</comment>
<comment type="catalytic activity">
    <reaction evidence="1">
        <text>N-terminal N-formyl-L-methionyl-[peptide] + H2O = N-terminal L-methionyl-[peptide] + formate</text>
        <dbReference type="Rhea" id="RHEA:24420"/>
        <dbReference type="Rhea" id="RHEA-COMP:10639"/>
        <dbReference type="Rhea" id="RHEA-COMP:10640"/>
        <dbReference type="ChEBI" id="CHEBI:15377"/>
        <dbReference type="ChEBI" id="CHEBI:15740"/>
        <dbReference type="ChEBI" id="CHEBI:49298"/>
        <dbReference type="ChEBI" id="CHEBI:64731"/>
        <dbReference type="EC" id="3.5.1.88"/>
    </reaction>
</comment>
<comment type="cofactor">
    <cofactor evidence="1">
        <name>Fe(2+)</name>
        <dbReference type="ChEBI" id="CHEBI:29033"/>
    </cofactor>
    <text evidence="1">Binds 1 Fe(2+) ion.</text>
</comment>
<comment type="similarity">
    <text evidence="1">Belongs to the polypeptide deformylase family.</text>
</comment>
<accession>P57948</accession>
<dbReference type="EC" id="3.5.1.88" evidence="1"/>
<dbReference type="EMBL" id="AE004439">
    <property type="protein sequence ID" value="AAK03643.1"/>
    <property type="molecule type" value="Genomic_DNA"/>
</dbReference>
<dbReference type="RefSeq" id="WP_005718266.1">
    <property type="nucleotide sequence ID" value="NC_002663.1"/>
</dbReference>
<dbReference type="SMR" id="P57948"/>
<dbReference type="STRING" id="272843.PM1559"/>
<dbReference type="EnsemblBacteria" id="AAK03643">
    <property type="protein sequence ID" value="AAK03643"/>
    <property type="gene ID" value="PM1559"/>
</dbReference>
<dbReference type="GeneID" id="77206876"/>
<dbReference type="KEGG" id="pmu:PM1559"/>
<dbReference type="HOGENOM" id="CLU_061901_2_1_6"/>
<dbReference type="OrthoDB" id="9804313at2"/>
<dbReference type="Proteomes" id="UP000000809">
    <property type="component" value="Chromosome"/>
</dbReference>
<dbReference type="GO" id="GO:0046872">
    <property type="term" value="F:metal ion binding"/>
    <property type="evidence" value="ECO:0007669"/>
    <property type="project" value="UniProtKB-KW"/>
</dbReference>
<dbReference type="GO" id="GO:0042586">
    <property type="term" value="F:peptide deformylase activity"/>
    <property type="evidence" value="ECO:0007669"/>
    <property type="project" value="UniProtKB-UniRule"/>
</dbReference>
<dbReference type="GO" id="GO:0043686">
    <property type="term" value="P:co-translational protein modification"/>
    <property type="evidence" value="ECO:0007669"/>
    <property type="project" value="TreeGrafter"/>
</dbReference>
<dbReference type="GO" id="GO:0006412">
    <property type="term" value="P:translation"/>
    <property type="evidence" value="ECO:0007669"/>
    <property type="project" value="UniProtKB-UniRule"/>
</dbReference>
<dbReference type="CDD" id="cd00487">
    <property type="entry name" value="Pep_deformylase"/>
    <property type="match status" value="1"/>
</dbReference>
<dbReference type="FunFam" id="3.90.45.10:FF:000001">
    <property type="entry name" value="Peptide deformylase"/>
    <property type="match status" value="1"/>
</dbReference>
<dbReference type="Gene3D" id="3.90.45.10">
    <property type="entry name" value="Peptide deformylase"/>
    <property type="match status" value="1"/>
</dbReference>
<dbReference type="HAMAP" id="MF_00163">
    <property type="entry name" value="Pep_deformylase"/>
    <property type="match status" value="1"/>
</dbReference>
<dbReference type="InterPro" id="IPR023635">
    <property type="entry name" value="Peptide_deformylase"/>
</dbReference>
<dbReference type="InterPro" id="IPR036821">
    <property type="entry name" value="Peptide_deformylase_sf"/>
</dbReference>
<dbReference type="NCBIfam" id="TIGR00079">
    <property type="entry name" value="pept_deformyl"/>
    <property type="match status" value="1"/>
</dbReference>
<dbReference type="NCBIfam" id="NF001159">
    <property type="entry name" value="PRK00150.1-3"/>
    <property type="match status" value="1"/>
</dbReference>
<dbReference type="PANTHER" id="PTHR10458">
    <property type="entry name" value="PEPTIDE DEFORMYLASE"/>
    <property type="match status" value="1"/>
</dbReference>
<dbReference type="PANTHER" id="PTHR10458:SF21">
    <property type="entry name" value="PEPTIDE DEFORMYLASE"/>
    <property type="match status" value="1"/>
</dbReference>
<dbReference type="Pfam" id="PF01327">
    <property type="entry name" value="Pep_deformylase"/>
    <property type="match status" value="1"/>
</dbReference>
<dbReference type="PIRSF" id="PIRSF004749">
    <property type="entry name" value="Pep_def"/>
    <property type="match status" value="1"/>
</dbReference>
<dbReference type="PRINTS" id="PR01576">
    <property type="entry name" value="PDEFORMYLASE"/>
</dbReference>
<dbReference type="SUPFAM" id="SSF56420">
    <property type="entry name" value="Peptide deformylase"/>
    <property type="match status" value="1"/>
</dbReference>
<keyword id="KW-0378">Hydrolase</keyword>
<keyword id="KW-0408">Iron</keyword>
<keyword id="KW-0479">Metal-binding</keyword>
<keyword id="KW-0648">Protein biosynthesis</keyword>
<keyword id="KW-1185">Reference proteome</keyword>
<organism>
    <name type="scientific">Pasteurella multocida (strain Pm70)</name>
    <dbReference type="NCBI Taxonomy" id="272843"/>
    <lineage>
        <taxon>Bacteria</taxon>
        <taxon>Pseudomonadati</taxon>
        <taxon>Pseudomonadota</taxon>
        <taxon>Gammaproteobacteria</taxon>
        <taxon>Pasteurellales</taxon>
        <taxon>Pasteurellaceae</taxon>
        <taxon>Pasteurella</taxon>
    </lineage>
</organism>
<gene>
    <name evidence="1" type="primary">def</name>
    <name type="ordered locus">PM1559</name>
</gene>
<evidence type="ECO:0000255" key="1">
    <source>
        <dbReference type="HAMAP-Rule" id="MF_00163"/>
    </source>
</evidence>
<feature type="chain" id="PRO_0000082812" description="Peptide deformylase">
    <location>
        <begin position="1"/>
        <end position="170"/>
    </location>
</feature>
<feature type="active site" evidence="1">
    <location>
        <position position="134"/>
    </location>
</feature>
<feature type="binding site" evidence="1">
    <location>
        <position position="91"/>
    </location>
    <ligand>
        <name>Fe cation</name>
        <dbReference type="ChEBI" id="CHEBI:24875"/>
    </ligand>
</feature>
<feature type="binding site" evidence="1">
    <location>
        <position position="133"/>
    </location>
    <ligand>
        <name>Fe cation</name>
        <dbReference type="ChEBI" id="CHEBI:24875"/>
    </ligand>
</feature>
<feature type="binding site" evidence="1">
    <location>
        <position position="137"/>
    </location>
    <ligand>
        <name>Fe cation</name>
        <dbReference type="ChEBI" id="CHEBI:24875"/>
    </ligand>
</feature>
<protein>
    <recommendedName>
        <fullName evidence="1">Peptide deformylase</fullName>
        <shortName evidence="1">PDF</shortName>
        <ecNumber evidence="1">3.5.1.88</ecNumber>
    </recommendedName>
    <alternativeName>
        <fullName evidence="1">Polypeptide deformylase</fullName>
    </alternativeName>
</protein>